<sequence length="76" mass="8090">MKALQVAGTLMLLFCLLAAVNATPGQVYINGKCIDCNKPDNDPGIIIPPDHKSAGSMSYTLTSGAIFFGIIYHIFS</sequence>
<protein>
    <recommendedName>
        <fullName evidence="8">Bomanin Tailed 2</fullName>
    </recommendedName>
    <alternativeName>
        <fullName evidence="4">Bomanin-836</fullName>
    </alternativeName>
</protein>
<feature type="signal peptide" evidence="1">
    <location>
        <begin position="1"/>
        <end position="22"/>
    </location>
</feature>
<feature type="propeptide" id="PRO_0000448692" description="Removed by a dipeptidylpeptidase" evidence="1">
    <location>
        <begin position="23"/>
        <end position="24"/>
    </location>
</feature>
<feature type="peptide" id="PRO_0000448693" description="Bomanin Tailed 2" evidence="1">
    <location>
        <begin position="25"/>
        <end position="76"/>
    </location>
</feature>
<feature type="disulfide bond" evidence="1">
    <location>
        <begin position="33"/>
        <end position="36"/>
    </location>
</feature>
<comment type="function">
    <text evidence="2 3">Secreted immune-induced peptide induced by Toll signaling (PubMed:25915418, PubMed:29920489). Has a role in resistance to bacterial and fungal infections (PubMed:25915418, PubMed:29920489). The strength of antimicrobial activity appears to correlate with the overall level of expression (PubMed:29920489).</text>
</comment>
<comment type="subcellular location">
    <subcellularLocation>
        <location evidence="1">Secreted</location>
    </subcellularLocation>
</comment>
<comment type="similarity">
    <text evidence="5">Belongs to the bomanin family.</text>
</comment>
<comment type="sequence caution" evidence="5">
    <conflict type="erroneous initiation">
        <sequence resource="EMBL-CDS" id="ADE06719"/>
    </conflict>
    <text>Extended N-terminus.</text>
</comment>
<name>BOMT2_DROME</name>
<reference evidence="9" key="1">
    <citation type="journal article" date="2000" name="Science">
        <title>The genome sequence of Drosophila melanogaster.</title>
        <authorList>
            <person name="Adams M.D."/>
            <person name="Celniker S.E."/>
            <person name="Holt R.A."/>
            <person name="Evans C.A."/>
            <person name="Gocayne J.D."/>
            <person name="Amanatides P.G."/>
            <person name="Scherer S.E."/>
            <person name="Li P.W."/>
            <person name="Hoskins R.A."/>
            <person name="Galle R.F."/>
            <person name="George R.A."/>
            <person name="Lewis S.E."/>
            <person name="Richards S."/>
            <person name="Ashburner M."/>
            <person name="Henderson S.N."/>
            <person name="Sutton G.G."/>
            <person name="Wortman J.R."/>
            <person name="Yandell M.D."/>
            <person name="Zhang Q."/>
            <person name="Chen L.X."/>
            <person name="Brandon R.C."/>
            <person name="Rogers Y.-H.C."/>
            <person name="Blazej R.G."/>
            <person name="Champe M."/>
            <person name="Pfeiffer B.D."/>
            <person name="Wan K.H."/>
            <person name="Doyle C."/>
            <person name="Baxter E.G."/>
            <person name="Helt G."/>
            <person name="Nelson C.R."/>
            <person name="Miklos G.L.G."/>
            <person name="Abril J.F."/>
            <person name="Agbayani A."/>
            <person name="An H.-J."/>
            <person name="Andrews-Pfannkoch C."/>
            <person name="Baldwin D."/>
            <person name="Ballew R.M."/>
            <person name="Basu A."/>
            <person name="Baxendale J."/>
            <person name="Bayraktaroglu L."/>
            <person name="Beasley E.M."/>
            <person name="Beeson K.Y."/>
            <person name="Benos P.V."/>
            <person name="Berman B.P."/>
            <person name="Bhandari D."/>
            <person name="Bolshakov S."/>
            <person name="Borkova D."/>
            <person name="Botchan M.R."/>
            <person name="Bouck J."/>
            <person name="Brokstein P."/>
            <person name="Brottier P."/>
            <person name="Burtis K.C."/>
            <person name="Busam D.A."/>
            <person name="Butler H."/>
            <person name="Cadieu E."/>
            <person name="Center A."/>
            <person name="Chandra I."/>
            <person name="Cherry J.M."/>
            <person name="Cawley S."/>
            <person name="Dahlke C."/>
            <person name="Davenport L.B."/>
            <person name="Davies P."/>
            <person name="de Pablos B."/>
            <person name="Delcher A."/>
            <person name="Deng Z."/>
            <person name="Mays A.D."/>
            <person name="Dew I."/>
            <person name="Dietz S.M."/>
            <person name="Dodson K."/>
            <person name="Doup L.E."/>
            <person name="Downes M."/>
            <person name="Dugan-Rocha S."/>
            <person name="Dunkov B.C."/>
            <person name="Dunn P."/>
            <person name="Durbin K.J."/>
            <person name="Evangelista C.C."/>
            <person name="Ferraz C."/>
            <person name="Ferriera S."/>
            <person name="Fleischmann W."/>
            <person name="Fosler C."/>
            <person name="Gabrielian A.E."/>
            <person name="Garg N.S."/>
            <person name="Gelbart W.M."/>
            <person name="Glasser K."/>
            <person name="Glodek A."/>
            <person name="Gong F."/>
            <person name="Gorrell J.H."/>
            <person name="Gu Z."/>
            <person name="Guan P."/>
            <person name="Harris M."/>
            <person name="Harris N.L."/>
            <person name="Harvey D.A."/>
            <person name="Heiman T.J."/>
            <person name="Hernandez J.R."/>
            <person name="Houck J."/>
            <person name="Hostin D."/>
            <person name="Houston K.A."/>
            <person name="Howland T.J."/>
            <person name="Wei M.-H."/>
            <person name="Ibegwam C."/>
            <person name="Jalali M."/>
            <person name="Kalush F."/>
            <person name="Karpen G.H."/>
            <person name="Ke Z."/>
            <person name="Kennison J.A."/>
            <person name="Ketchum K.A."/>
            <person name="Kimmel B.E."/>
            <person name="Kodira C.D."/>
            <person name="Kraft C.L."/>
            <person name="Kravitz S."/>
            <person name="Kulp D."/>
            <person name="Lai Z."/>
            <person name="Lasko P."/>
            <person name="Lei Y."/>
            <person name="Levitsky A.A."/>
            <person name="Li J.H."/>
            <person name="Li Z."/>
            <person name="Liang Y."/>
            <person name="Lin X."/>
            <person name="Liu X."/>
            <person name="Mattei B."/>
            <person name="McIntosh T.C."/>
            <person name="McLeod M.P."/>
            <person name="McPherson D."/>
            <person name="Merkulov G."/>
            <person name="Milshina N.V."/>
            <person name="Mobarry C."/>
            <person name="Morris J."/>
            <person name="Moshrefi A."/>
            <person name="Mount S.M."/>
            <person name="Moy M."/>
            <person name="Murphy B."/>
            <person name="Murphy L."/>
            <person name="Muzny D.M."/>
            <person name="Nelson D.L."/>
            <person name="Nelson D.R."/>
            <person name="Nelson K.A."/>
            <person name="Nixon K."/>
            <person name="Nusskern D.R."/>
            <person name="Pacleb J.M."/>
            <person name="Palazzolo M."/>
            <person name="Pittman G.S."/>
            <person name="Pan S."/>
            <person name="Pollard J."/>
            <person name="Puri V."/>
            <person name="Reese M.G."/>
            <person name="Reinert K."/>
            <person name="Remington K."/>
            <person name="Saunders R.D.C."/>
            <person name="Scheeler F."/>
            <person name="Shen H."/>
            <person name="Shue B.C."/>
            <person name="Siden-Kiamos I."/>
            <person name="Simpson M."/>
            <person name="Skupski M.P."/>
            <person name="Smith T.J."/>
            <person name="Spier E."/>
            <person name="Spradling A.C."/>
            <person name="Stapleton M."/>
            <person name="Strong R."/>
            <person name="Sun E."/>
            <person name="Svirskas R."/>
            <person name="Tector C."/>
            <person name="Turner R."/>
            <person name="Venter E."/>
            <person name="Wang A.H."/>
            <person name="Wang X."/>
            <person name="Wang Z.-Y."/>
            <person name="Wassarman D.A."/>
            <person name="Weinstock G.M."/>
            <person name="Weissenbach J."/>
            <person name="Williams S.M."/>
            <person name="Woodage T."/>
            <person name="Worley K.C."/>
            <person name="Wu D."/>
            <person name="Yang S."/>
            <person name="Yao Q.A."/>
            <person name="Ye J."/>
            <person name="Yeh R.-F."/>
            <person name="Zaveri J.S."/>
            <person name="Zhan M."/>
            <person name="Zhang G."/>
            <person name="Zhao Q."/>
            <person name="Zheng L."/>
            <person name="Zheng X.H."/>
            <person name="Zhong F.N."/>
            <person name="Zhong W."/>
            <person name="Zhou X."/>
            <person name="Zhu S.C."/>
            <person name="Zhu X."/>
            <person name="Smith H.O."/>
            <person name="Gibbs R.A."/>
            <person name="Myers E.W."/>
            <person name="Rubin G.M."/>
            <person name="Venter J.C."/>
        </authorList>
    </citation>
    <scope>NUCLEOTIDE SEQUENCE [LARGE SCALE GENOMIC DNA]</scope>
    <source>
        <strain evidence="9">Berkeley</strain>
    </source>
</reference>
<reference evidence="9" key="2">
    <citation type="journal article" date="2002" name="Genome Biol.">
        <title>Annotation of the Drosophila melanogaster euchromatic genome: a systematic review.</title>
        <authorList>
            <person name="Misra S."/>
            <person name="Crosby M.A."/>
            <person name="Mungall C.J."/>
            <person name="Matthews B.B."/>
            <person name="Campbell K.S."/>
            <person name="Hradecky P."/>
            <person name="Huang Y."/>
            <person name="Kaminker J.S."/>
            <person name="Millburn G.H."/>
            <person name="Prochnik S.E."/>
            <person name="Smith C.D."/>
            <person name="Tupy J.L."/>
            <person name="Whitfield E.J."/>
            <person name="Bayraktaroglu L."/>
            <person name="Berman B.P."/>
            <person name="Bettencourt B.R."/>
            <person name="Celniker S.E."/>
            <person name="de Grey A.D.N.J."/>
            <person name="Drysdale R.A."/>
            <person name="Harris N.L."/>
            <person name="Richter J."/>
            <person name="Russo S."/>
            <person name="Schroeder A.J."/>
            <person name="Shu S.Q."/>
            <person name="Stapleton M."/>
            <person name="Yamada C."/>
            <person name="Ashburner M."/>
            <person name="Gelbart W.M."/>
            <person name="Rubin G.M."/>
            <person name="Lewis S.E."/>
        </authorList>
    </citation>
    <scope>GENOME REANNOTATION</scope>
    <source>
        <strain evidence="9">Berkeley</strain>
    </source>
</reference>
<reference evidence="6 7" key="3">
    <citation type="submission" date="2016-07" db="EMBL/GenBank/DDBJ databases">
        <authorList>
            <person name="Booth B."/>
            <person name="Calderwood M."/>
            <person name="Carlson J."/>
            <person name="Celniker S."/>
            <person name="Frise E."/>
            <person name="Hao T."/>
            <person name="Hu Y."/>
            <person name="Hill D."/>
            <person name="Yu C."/>
            <person name="Mohr S."/>
            <person name="Park S."/>
            <person name="Perrimon N."/>
            <person name="Spirohn K."/>
            <person name="Vidal M."/>
            <person name="Wan K."/>
        </authorList>
    </citation>
    <scope>NUCLEOTIDE SEQUENCE [LARGE SCALE MRNA]</scope>
</reference>
<reference key="4">
    <citation type="journal article" date="2015" name="PLoS Pathog.">
        <title>An effector Peptide family required for Drosophila toll-mediated immunity.</title>
        <authorList>
            <person name="Clemmons A.W."/>
            <person name="Lindsay S.A."/>
            <person name="Wasserman S.A."/>
        </authorList>
    </citation>
    <scope>FUNCTION</scope>
</reference>
<reference evidence="5" key="5">
    <citation type="journal article" date="2018" name="J. Innate Immun.">
        <title>Short-Form Bomanins Mediate Humoral Immunity in Drosophila.</title>
        <authorList>
            <person name="Lindsay S.A."/>
            <person name="Lin S.J.H."/>
            <person name="Wasserman S.A."/>
        </authorList>
    </citation>
    <scope>FUNCTION</scope>
</reference>
<gene>
    <name evidence="8" type="primary">BomT2</name>
    <name evidence="4" type="synonym">Bom836</name>
    <name evidence="8" type="ORF">CG16836</name>
</gene>
<evidence type="ECO:0000250" key="1">
    <source>
        <dbReference type="UniProtKB" id="P82706"/>
    </source>
</evidence>
<evidence type="ECO:0000269" key="2">
    <source>
    </source>
</evidence>
<evidence type="ECO:0000269" key="3">
    <source>
    </source>
</evidence>
<evidence type="ECO:0000303" key="4">
    <source>
    </source>
</evidence>
<evidence type="ECO:0000305" key="5"/>
<evidence type="ECO:0000312" key="6">
    <source>
        <dbReference type="EMBL" id="ADE06719.1"/>
    </source>
</evidence>
<evidence type="ECO:0000312" key="7">
    <source>
        <dbReference type="EMBL" id="ANY27303.1"/>
    </source>
</evidence>
<evidence type="ECO:0000312" key="8">
    <source>
        <dbReference type="FlyBase" id="FBgn0040735"/>
    </source>
</evidence>
<evidence type="ECO:0000312" key="9">
    <source>
        <dbReference type="Proteomes" id="UP000000803"/>
    </source>
</evidence>
<keyword id="KW-1015">Disulfide bond</keyword>
<keyword id="KW-0391">Immunity</keyword>
<keyword id="KW-0399">Innate immunity</keyword>
<keyword id="KW-1185">Reference proteome</keyword>
<keyword id="KW-0964">Secreted</keyword>
<keyword id="KW-0732">Signal</keyword>
<proteinExistence type="inferred from homology"/>
<dbReference type="EMBL" id="AE013599">
    <property type="protein sequence ID" value="AAF57706.1"/>
    <property type="molecule type" value="Genomic_DNA"/>
</dbReference>
<dbReference type="EMBL" id="BT122113">
    <property type="protein sequence ID" value="ADE06719.1"/>
    <property type="status" value="ALT_INIT"/>
    <property type="molecule type" value="mRNA"/>
</dbReference>
<dbReference type="EMBL" id="KX531493">
    <property type="protein sequence ID" value="ANY27303.1"/>
    <property type="molecule type" value="mRNA"/>
</dbReference>
<dbReference type="RefSeq" id="NP_652367.1">
    <property type="nucleotide sequence ID" value="NM_144110.2"/>
</dbReference>
<dbReference type="FunCoup" id="A1ZB62">
    <property type="interactions" value="2"/>
</dbReference>
<dbReference type="IntAct" id="A1ZB62">
    <property type="interactions" value="3"/>
</dbReference>
<dbReference type="STRING" id="7227.FBpp0085847"/>
<dbReference type="GlyGen" id="A1ZB62">
    <property type="glycosylation" value="1 site"/>
</dbReference>
<dbReference type="PaxDb" id="7227-FBpp0085847"/>
<dbReference type="DNASU" id="50208"/>
<dbReference type="EnsemblMetazoa" id="FBtr0086666">
    <property type="protein sequence ID" value="FBpp0085847"/>
    <property type="gene ID" value="FBgn0040735"/>
</dbReference>
<dbReference type="GeneID" id="50208"/>
<dbReference type="KEGG" id="dme:Dmel_CG16836"/>
<dbReference type="UCSC" id="CG16836-RA">
    <property type="organism name" value="d. melanogaster"/>
</dbReference>
<dbReference type="AGR" id="FB:FBgn0040735"/>
<dbReference type="CTD" id="50208"/>
<dbReference type="FlyBase" id="FBgn0040735">
    <property type="gene designation" value="BomT2"/>
</dbReference>
<dbReference type="VEuPathDB" id="VectorBase:FBgn0040735"/>
<dbReference type="eggNOG" id="ENOG502T99X">
    <property type="taxonomic scope" value="Eukaryota"/>
</dbReference>
<dbReference type="HOGENOM" id="CLU_2673718_0_0_1"/>
<dbReference type="InParanoid" id="A1ZB62"/>
<dbReference type="OMA" id="CNRPDGD"/>
<dbReference type="OrthoDB" id="7852019at2759"/>
<dbReference type="PhylomeDB" id="A1ZB62"/>
<dbReference type="BioGRID-ORCS" id="50208">
    <property type="hits" value="0 hits in 1 CRISPR screen"/>
</dbReference>
<dbReference type="GenomeRNAi" id="50208"/>
<dbReference type="PRO" id="PR:A1ZB62"/>
<dbReference type="Proteomes" id="UP000000803">
    <property type="component" value="Chromosome 2R"/>
</dbReference>
<dbReference type="Bgee" id="FBgn0040735">
    <property type="expression patterns" value="Expressed in capitellum (Drosophila) and 75 other cell types or tissues"/>
</dbReference>
<dbReference type="GO" id="GO:0005576">
    <property type="term" value="C:extracellular region"/>
    <property type="evidence" value="ECO:0007669"/>
    <property type="project" value="UniProtKB-SubCell"/>
</dbReference>
<dbReference type="GO" id="GO:0045087">
    <property type="term" value="P:innate immune response"/>
    <property type="evidence" value="ECO:0007669"/>
    <property type="project" value="UniProtKB-KW"/>
</dbReference>
<dbReference type="InterPro" id="IPR013172">
    <property type="entry name" value="Bomanin"/>
</dbReference>
<dbReference type="Pfam" id="PF08194">
    <property type="entry name" value="DIM"/>
    <property type="match status" value="1"/>
</dbReference>
<organism evidence="9">
    <name type="scientific">Drosophila melanogaster</name>
    <name type="common">Fruit fly</name>
    <dbReference type="NCBI Taxonomy" id="7227"/>
    <lineage>
        <taxon>Eukaryota</taxon>
        <taxon>Metazoa</taxon>
        <taxon>Ecdysozoa</taxon>
        <taxon>Arthropoda</taxon>
        <taxon>Hexapoda</taxon>
        <taxon>Insecta</taxon>
        <taxon>Pterygota</taxon>
        <taxon>Neoptera</taxon>
        <taxon>Endopterygota</taxon>
        <taxon>Diptera</taxon>
        <taxon>Brachycera</taxon>
        <taxon>Muscomorpha</taxon>
        <taxon>Ephydroidea</taxon>
        <taxon>Drosophilidae</taxon>
        <taxon>Drosophila</taxon>
        <taxon>Sophophora</taxon>
    </lineage>
</organism>
<accession>A1ZB62</accession>
<accession>D4G7G1</accession>